<keyword id="KW-0066">ATP synthesis</keyword>
<keyword id="KW-0067">ATP-binding</keyword>
<keyword id="KW-0997">Cell inner membrane</keyword>
<keyword id="KW-1003">Cell membrane</keyword>
<keyword id="KW-0139">CF(1)</keyword>
<keyword id="KW-0375">Hydrogen ion transport</keyword>
<keyword id="KW-0406">Ion transport</keyword>
<keyword id="KW-0472">Membrane</keyword>
<keyword id="KW-0547">Nucleotide-binding</keyword>
<keyword id="KW-1278">Translocase</keyword>
<keyword id="KW-0813">Transport</keyword>
<feature type="chain" id="PRO_0000302704" description="ATP synthase subunit alpha">
    <location>
        <begin position="1"/>
        <end position="512"/>
    </location>
</feature>
<feature type="binding site" evidence="1">
    <location>
        <begin position="170"/>
        <end position="177"/>
    </location>
    <ligand>
        <name>ATP</name>
        <dbReference type="ChEBI" id="CHEBI:30616"/>
    </ligand>
</feature>
<feature type="site" description="Required for activity" evidence="1">
    <location>
        <position position="363"/>
    </location>
</feature>
<gene>
    <name evidence="1" type="primary">atpA</name>
    <name type="ordered locus">Acid_0463</name>
</gene>
<dbReference type="EC" id="7.1.2.2" evidence="1"/>
<dbReference type="EMBL" id="CP000473">
    <property type="protein sequence ID" value="ABJ81473.1"/>
    <property type="molecule type" value="Genomic_DNA"/>
</dbReference>
<dbReference type="SMR" id="Q02BU3"/>
<dbReference type="FunCoup" id="Q02BU3">
    <property type="interactions" value="478"/>
</dbReference>
<dbReference type="STRING" id="234267.Acid_0463"/>
<dbReference type="KEGG" id="sus:Acid_0463"/>
<dbReference type="eggNOG" id="COG0056">
    <property type="taxonomic scope" value="Bacteria"/>
</dbReference>
<dbReference type="HOGENOM" id="CLU_010091_2_1_0"/>
<dbReference type="InParanoid" id="Q02BU3"/>
<dbReference type="OrthoDB" id="9803053at2"/>
<dbReference type="GO" id="GO:0005886">
    <property type="term" value="C:plasma membrane"/>
    <property type="evidence" value="ECO:0007669"/>
    <property type="project" value="UniProtKB-SubCell"/>
</dbReference>
<dbReference type="GO" id="GO:0045259">
    <property type="term" value="C:proton-transporting ATP synthase complex"/>
    <property type="evidence" value="ECO:0007669"/>
    <property type="project" value="UniProtKB-KW"/>
</dbReference>
<dbReference type="GO" id="GO:0043531">
    <property type="term" value="F:ADP binding"/>
    <property type="evidence" value="ECO:0007669"/>
    <property type="project" value="TreeGrafter"/>
</dbReference>
<dbReference type="GO" id="GO:0005524">
    <property type="term" value="F:ATP binding"/>
    <property type="evidence" value="ECO:0007669"/>
    <property type="project" value="UniProtKB-UniRule"/>
</dbReference>
<dbReference type="GO" id="GO:0046933">
    <property type="term" value="F:proton-transporting ATP synthase activity, rotational mechanism"/>
    <property type="evidence" value="ECO:0007669"/>
    <property type="project" value="UniProtKB-UniRule"/>
</dbReference>
<dbReference type="CDD" id="cd18113">
    <property type="entry name" value="ATP-synt_F1_alpha_C"/>
    <property type="match status" value="1"/>
</dbReference>
<dbReference type="CDD" id="cd18116">
    <property type="entry name" value="ATP-synt_F1_alpha_N"/>
    <property type="match status" value="1"/>
</dbReference>
<dbReference type="CDD" id="cd01132">
    <property type="entry name" value="F1-ATPase_alpha_CD"/>
    <property type="match status" value="1"/>
</dbReference>
<dbReference type="FunFam" id="1.20.150.20:FF:000001">
    <property type="entry name" value="ATP synthase subunit alpha"/>
    <property type="match status" value="1"/>
</dbReference>
<dbReference type="FunFam" id="2.40.30.20:FF:000001">
    <property type="entry name" value="ATP synthase subunit alpha"/>
    <property type="match status" value="1"/>
</dbReference>
<dbReference type="FunFam" id="3.40.50.300:FF:000002">
    <property type="entry name" value="ATP synthase subunit alpha"/>
    <property type="match status" value="1"/>
</dbReference>
<dbReference type="Gene3D" id="2.40.30.20">
    <property type="match status" value="1"/>
</dbReference>
<dbReference type="Gene3D" id="1.20.150.20">
    <property type="entry name" value="ATP synthase alpha/beta chain, C-terminal domain"/>
    <property type="match status" value="1"/>
</dbReference>
<dbReference type="Gene3D" id="3.40.50.300">
    <property type="entry name" value="P-loop containing nucleotide triphosphate hydrolases"/>
    <property type="match status" value="1"/>
</dbReference>
<dbReference type="HAMAP" id="MF_01346">
    <property type="entry name" value="ATP_synth_alpha_bact"/>
    <property type="match status" value="1"/>
</dbReference>
<dbReference type="InterPro" id="IPR023366">
    <property type="entry name" value="ATP_synth_asu-like_sf"/>
</dbReference>
<dbReference type="InterPro" id="IPR000793">
    <property type="entry name" value="ATP_synth_asu_C"/>
</dbReference>
<dbReference type="InterPro" id="IPR038376">
    <property type="entry name" value="ATP_synth_asu_C_sf"/>
</dbReference>
<dbReference type="InterPro" id="IPR033732">
    <property type="entry name" value="ATP_synth_F1_a_nt-bd_dom"/>
</dbReference>
<dbReference type="InterPro" id="IPR005294">
    <property type="entry name" value="ATP_synth_F1_asu"/>
</dbReference>
<dbReference type="InterPro" id="IPR020003">
    <property type="entry name" value="ATPase_a/bsu_AS"/>
</dbReference>
<dbReference type="InterPro" id="IPR004100">
    <property type="entry name" value="ATPase_F1/V1/A1_a/bsu_N"/>
</dbReference>
<dbReference type="InterPro" id="IPR036121">
    <property type="entry name" value="ATPase_F1/V1/A1_a/bsu_N_sf"/>
</dbReference>
<dbReference type="InterPro" id="IPR000194">
    <property type="entry name" value="ATPase_F1/V1/A1_a/bsu_nucl-bd"/>
</dbReference>
<dbReference type="InterPro" id="IPR027417">
    <property type="entry name" value="P-loop_NTPase"/>
</dbReference>
<dbReference type="NCBIfam" id="TIGR00962">
    <property type="entry name" value="atpA"/>
    <property type="match status" value="1"/>
</dbReference>
<dbReference type="NCBIfam" id="NF009884">
    <property type="entry name" value="PRK13343.1"/>
    <property type="match status" value="1"/>
</dbReference>
<dbReference type="PANTHER" id="PTHR48082">
    <property type="entry name" value="ATP SYNTHASE SUBUNIT ALPHA, MITOCHONDRIAL"/>
    <property type="match status" value="1"/>
</dbReference>
<dbReference type="PANTHER" id="PTHR48082:SF2">
    <property type="entry name" value="ATP SYNTHASE SUBUNIT ALPHA, MITOCHONDRIAL"/>
    <property type="match status" value="1"/>
</dbReference>
<dbReference type="Pfam" id="PF00006">
    <property type="entry name" value="ATP-synt_ab"/>
    <property type="match status" value="1"/>
</dbReference>
<dbReference type="Pfam" id="PF00306">
    <property type="entry name" value="ATP-synt_ab_C"/>
    <property type="match status" value="1"/>
</dbReference>
<dbReference type="Pfam" id="PF02874">
    <property type="entry name" value="ATP-synt_ab_N"/>
    <property type="match status" value="1"/>
</dbReference>
<dbReference type="PIRSF" id="PIRSF039088">
    <property type="entry name" value="F_ATPase_subunit_alpha"/>
    <property type="match status" value="1"/>
</dbReference>
<dbReference type="SUPFAM" id="SSF47917">
    <property type="entry name" value="C-terminal domain of alpha and beta subunits of F1 ATP synthase"/>
    <property type="match status" value="1"/>
</dbReference>
<dbReference type="SUPFAM" id="SSF50615">
    <property type="entry name" value="N-terminal domain of alpha and beta subunits of F1 ATP synthase"/>
    <property type="match status" value="1"/>
</dbReference>
<dbReference type="SUPFAM" id="SSF52540">
    <property type="entry name" value="P-loop containing nucleoside triphosphate hydrolases"/>
    <property type="match status" value="1"/>
</dbReference>
<dbReference type="PROSITE" id="PS00152">
    <property type="entry name" value="ATPASE_ALPHA_BETA"/>
    <property type="match status" value="1"/>
</dbReference>
<proteinExistence type="inferred from homology"/>
<organism>
    <name type="scientific">Solibacter usitatus (strain Ellin6076)</name>
    <dbReference type="NCBI Taxonomy" id="234267"/>
    <lineage>
        <taxon>Bacteria</taxon>
        <taxon>Pseudomonadati</taxon>
        <taxon>Acidobacteriota</taxon>
        <taxon>Terriglobia</taxon>
        <taxon>Bryobacterales</taxon>
        <taxon>Solibacteraceae</taxon>
        <taxon>Candidatus Solibacter</taxon>
    </lineage>
</organism>
<evidence type="ECO:0000255" key="1">
    <source>
        <dbReference type="HAMAP-Rule" id="MF_01346"/>
    </source>
</evidence>
<accession>Q02BU3</accession>
<sequence>MAHIRADEITSILRQEIENYERAIDVSEVGSVISVGDGIARIHGLEKVMAGELIEFPHDVAGIAMNLEEDQVGAVLLGDYTLIKEGDEVKRTKRIMSVPVGEALIGRVVNALGQPIDGKGPINATQFNPIERLAPGVVARQPVKEPMMTGIKAVDAMIPIGRGQRELIIGDRQTGKTAIALDAIINQKGGDMICIYVAIGQKRSTVAQVVKTLEDNGAMEYSIVVVASASDPAPMQYLAPFSGCAIGEYFRDSKRHALCIYDDLSKHAAAYREISLLLRRPPGREAFPGDVFYLHSRLLERAAKLNNEHGAGSLTALPFIETQAGDVSAYIPTNVISITDGQIFLEADLFNSNQRPAINVGISVSRVGGNAQTKAMKSIAGGLRLDLAQYRELAAFAQFGSDLDKSSQAQLNRGRHLVEILKQDQYQPLPLEKQIMIIWAGTKGYLDDIPVELCRKFEAELYRFSENAHRPVLDEIKTKKALDPDLTAKVKGIVEEFKGRFMAENAPAKAHA</sequence>
<comment type="function">
    <text evidence="1">Produces ATP from ADP in the presence of a proton gradient across the membrane. The alpha chain is a regulatory subunit.</text>
</comment>
<comment type="catalytic activity">
    <reaction evidence="1">
        <text>ATP + H2O + 4 H(+)(in) = ADP + phosphate + 5 H(+)(out)</text>
        <dbReference type="Rhea" id="RHEA:57720"/>
        <dbReference type="ChEBI" id="CHEBI:15377"/>
        <dbReference type="ChEBI" id="CHEBI:15378"/>
        <dbReference type="ChEBI" id="CHEBI:30616"/>
        <dbReference type="ChEBI" id="CHEBI:43474"/>
        <dbReference type="ChEBI" id="CHEBI:456216"/>
        <dbReference type="EC" id="7.1.2.2"/>
    </reaction>
</comment>
<comment type="subunit">
    <text evidence="1">F-type ATPases have 2 components, CF(1) - the catalytic core - and CF(0) - the membrane proton channel. CF(1) has five subunits: alpha(3), beta(3), gamma(1), delta(1), epsilon(1). CF(0) has three main subunits: a(1), b(2) and c(9-12). The alpha and beta chains form an alternating ring which encloses part of the gamma chain. CF(1) is attached to CF(0) by a central stalk formed by the gamma and epsilon chains, while a peripheral stalk is formed by the delta and b chains.</text>
</comment>
<comment type="subcellular location">
    <subcellularLocation>
        <location evidence="1">Cell inner membrane</location>
        <topology evidence="1">Peripheral membrane protein</topology>
    </subcellularLocation>
</comment>
<comment type="similarity">
    <text evidence="1">Belongs to the ATPase alpha/beta chains family.</text>
</comment>
<reference key="1">
    <citation type="journal article" date="2009" name="Appl. Environ. Microbiol.">
        <title>Three genomes from the phylum Acidobacteria provide insight into the lifestyles of these microorganisms in soils.</title>
        <authorList>
            <person name="Ward N.L."/>
            <person name="Challacombe J.F."/>
            <person name="Janssen P.H."/>
            <person name="Henrissat B."/>
            <person name="Coutinho P.M."/>
            <person name="Wu M."/>
            <person name="Xie G."/>
            <person name="Haft D.H."/>
            <person name="Sait M."/>
            <person name="Badger J."/>
            <person name="Barabote R.D."/>
            <person name="Bradley B."/>
            <person name="Brettin T.S."/>
            <person name="Brinkac L.M."/>
            <person name="Bruce D."/>
            <person name="Creasy T."/>
            <person name="Daugherty S.C."/>
            <person name="Davidsen T.M."/>
            <person name="DeBoy R.T."/>
            <person name="Detter J.C."/>
            <person name="Dodson R.J."/>
            <person name="Durkin A.S."/>
            <person name="Ganapathy A."/>
            <person name="Gwinn-Giglio M."/>
            <person name="Han C.S."/>
            <person name="Khouri H."/>
            <person name="Kiss H."/>
            <person name="Kothari S.P."/>
            <person name="Madupu R."/>
            <person name="Nelson K.E."/>
            <person name="Nelson W.C."/>
            <person name="Paulsen I."/>
            <person name="Penn K."/>
            <person name="Ren Q."/>
            <person name="Rosovitz M.J."/>
            <person name="Selengut J.D."/>
            <person name="Shrivastava S."/>
            <person name="Sullivan S.A."/>
            <person name="Tapia R."/>
            <person name="Thompson L.S."/>
            <person name="Watkins K.L."/>
            <person name="Yang Q."/>
            <person name="Yu C."/>
            <person name="Zafar N."/>
            <person name="Zhou L."/>
            <person name="Kuske C.R."/>
        </authorList>
    </citation>
    <scope>NUCLEOTIDE SEQUENCE [LARGE SCALE GENOMIC DNA]</scope>
    <source>
        <strain>Ellin6076</strain>
    </source>
</reference>
<name>ATPA_SOLUE</name>
<protein>
    <recommendedName>
        <fullName evidence="1">ATP synthase subunit alpha</fullName>
        <ecNumber evidence="1">7.1.2.2</ecNumber>
    </recommendedName>
    <alternativeName>
        <fullName evidence="1">ATP synthase F1 sector subunit alpha</fullName>
    </alternativeName>
    <alternativeName>
        <fullName evidence="1">F-ATPase subunit alpha</fullName>
    </alternativeName>
</protein>